<organism>
    <name type="scientific">Haloferax volcanii (strain ATCC 29605 / DSM 3757 / JCM 8879 / NBRC 14742 / NCIMB 2012 / VKM B-1768 / DS2)</name>
    <name type="common">Halobacterium volcanii</name>
    <dbReference type="NCBI Taxonomy" id="309800"/>
    <lineage>
        <taxon>Archaea</taxon>
        <taxon>Methanobacteriati</taxon>
        <taxon>Methanobacteriota</taxon>
        <taxon>Stenosarchaea group</taxon>
        <taxon>Halobacteria</taxon>
        <taxon>Halobacteriales</taxon>
        <taxon>Haloferacaceae</taxon>
        <taxon>Haloferax</taxon>
    </lineage>
</organism>
<name>AGL12_HALVD</name>
<gene>
    <name type="primary">agl12</name>
    <name type="ordered locus">HVO_2059</name>
    <name type="ORF">C498_05583</name>
</gene>
<proteinExistence type="inferred from homology"/>
<feature type="chain" id="PRO_0000428775" description="Low-salt glycan biosynthesis protein Agl12">
    <location>
        <begin position="1"/>
        <end position="310"/>
    </location>
</feature>
<feature type="active site" description="Proton donor" evidence="1">
    <location>
        <position position="123"/>
    </location>
</feature>
<feature type="active site" description="Proton acceptor" evidence="1">
    <location>
        <position position="124"/>
    </location>
</feature>
<feature type="active site" description="Proton acceptor" evidence="1">
    <location>
        <position position="146"/>
    </location>
</feature>
<feature type="binding site" evidence="2">
    <location>
        <begin position="7"/>
        <end position="13"/>
    </location>
    <ligand>
        <name>NAD(+)</name>
        <dbReference type="ChEBI" id="CHEBI:57540"/>
    </ligand>
</feature>
<feature type="binding site" evidence="1">
    <location>
        <begin position="32"/>
        <end position="35"/>
    </location>
    <ligand>
        <name>NAD(+)</name>
        <dbReference type="ChEBI" id="CHEBI:57540"/>
    </ligand>
</feature>
<feature type="binding site" evidence="1">
    <location>
        <begin position="58"/>
        <end position="59"/>
    </location>
    <ligand>
        <name>NAD(+)</name>
        <dbReference type="ChEBI" id="CHEBI:57540"/>
    </ligand>
</feature>
<feature type="binding site" evidence="1">
    <location>
        <position position="82"/>
    </location>
    <ligand>
        <name>substrate</name>
    </ligand>
</feature>
<feature type="binding site" evidence="1">
    <location>
        <position position="97"/>
    </location>
    <ligand>
        <name>NAD(+)</name>
        <dbReference type="ChEBI" id="CHEBI:57540"/>
    </ligand>
</feature>
<feature type="binding site" evidence="1">
    <location>
        <begin position="122"/>
        <end position="124"/>
    </location>
    <ligand>
        <name>substrate</name>
    </ligand>
</feature>
<feature type="binding site" evidence="1">
    <location>
        <position position="122"/>
    </location>
    <ligand>
        <name>substrate</name>
    </ligand>
</feature>
<feature type="binding site" evidence="1">
    <location>
        <begin position="146"/>
        <end position="150"/>
    </location>
    <ligand>
        <name>NAD(+)</name>
        <dbReference type="ChEBI" id="CHEBI:57540"/>
    </ligand>
</feature>
<feature type="binding site" evidence="1">
    <location>
        <position position="175"/>
    </location>
    <ligand>
        <name>substrate</name>
    </ligand>
</feature>
<feature type="binding site" evidence="1">
    <location>
        <position position="176"/>
    </location>
    <ligand>
        <name>NAD(+)</name>
        <dbReference type="ChEBI" id="CHEBI:57540"/>
    </ligand>
</feature>
<feature type="binding site" evidence="1">
    <location>
        <begin position="185"/>
        <end position="186"/>
    </location>
    <ligand>
        <name>substrate</name>
    </ligand>
</feature>
<feature type="binding site" evidence="1">
    <location>
        <begin position="201"/>
        <end position="203"/>
    </location>
    <ligand>
        <name>substrate</name>
    </ligand>
</feature>
<feature type="binding site" evidence="1">
    <location>
        <position position="210"/>
    </location>
    <ligand>
        <name>substrate</name>
    </ligand>
</feature>
<feature type="binding site" evidence="1">
    <location>
        <position position="245"/>
    </location>
    <ligand>
        <name>substrate</name>
    </ligand>
</feature>
<feature type="binding site" evidence="1">
    <location>
        <begin position="269"/>
        <end position="272"/>
    </location>
    <ligand>
        <name>substrate</name>
    </ligand>
</feature>
<evidence type="ECO:0000250" key="1"/>
<evidence type="ECO:0000255" key="2"/>
<evidence type="ECO:0000269" key="3">
    <source>
    </source>
</evidence>
<evidence type="ECO:0000305" key="4"/>
<protein>
    <recommendedName>
        <fullName>Low-salt glycan biosynthesis protein Agl12</fullName>
        <ecNumber>4.2.1.-</ecNumber>
    </recommendedName>
</protein>
<keyword id="KW-0456">Lyase</keyword>
<keyword id="KW-0520">NAD</keyword>
<keyword id="KW-1185">Reference proteome</keyword>
<dbReference type="EC" id="4.2.1.-"/>
<dbReference type="EMBL" id="CP001956">
    <property type="protein sequence ID" value="ADE03524.1"/>
    <property type="molecule type" value="Genomic_DNA"/>
</dbReference>
<dbReference type="EMBL" id="AOHU01000040">
    <property type="protein sequence ID" value="ELY33653.1"/>
    <property type="molecule type" value="Genomic_DNA"/>
</dbReference>
<dbReference type="RefSeq" id="WP_004041944.1">
    <property type="nucleotide sequence ID" value="NC_013967.1"/>
</dbReference>
<dbReference type="SMR" id="D4GU72"/>
<dbReference type="STRING" id="309800.HVO_2059"/>
<dbReference type="PaxDb" id="309800-C498_05583"/>
<dbReference type="EnsemblBacteria" id="ADE03524">
    <property type="protein sequence ID" value="ADE03524"/>
    <property type="gene ID" value="HVO_2059"/>
</dbReference>
<dbReference type="GeneID" id="8924604"/>
<dbReference type="KEGG" id="hvo:HVO_2059"/>
<dbReference type="PATRIC" id="fig|309800.29.peg.1083"/>
<dbReference type="eggNOG" id="arCOG01371">
    <property type="taxonomic scope" value="Archaea"/>
</dbReference>
<dbReference type="HOGENOM" id="CLU_007383_1_14_2"/>
<dbReference type="OrthoDB" id="4907at2157"/>
<dbReference type="BioCyc" id="MetaCyc:MONOMER-18752"/>
<dbReference type="UniPathway" id="UPA00378"/>
<dbReference type="UniPathway" id="UPA00977"/>
<dbReference type="Proteomes" id="UP000008243">
    <property type="component" value="Chromosome"/>
</dbReference>
<dbReference type="Proteomes" id="UP000011532">
    <property type="component" value="Unassembled WGS sequence"/>
</dbReference>
<dbReference type="GO" id="GO:0008460">
    <property type="term" value="F:dTDP-glucose 4,6-dehydratase activity"/>
    <property type="evidence" value="ECO:0007669"/>
    <property type="project" value="InterPro"/>
</dbReference>
<dbReference type="GO" id="GO:0009225">
    <property type="term" value="P:nucleotide-sugar metabolic process"/>
    <property type="evidence" value="ECO:0007669"/>
    <property type="project" value="InterPro"/>
</dbReference>
<dbReference type="GO" id="GO:0006486">
    <property type="term" value="P:protein glycosylation"/>
    <property type="evidence" value="ECO:0007669"/>
    <property type="project" value="UniProtKB-UniPathway"/>
</dbReference>
<dbReference type="GO" id="GO:0045232">
    <property type="term" value="P:S-layer organization"/>
    <property type="evidence" value="ECO:0007669"/>
    <property type="project" value="UniProtKB-UniPathway"/>
</dbReference>
<dbReference type="CDD" id="cd05246">
    <property type="entry name" value="dTDP_GD_SDR_e"/>
    <property type="match status" value="1"/>
</dbReference>
<dbReference type="Gene3D" id="3.40.50.720">
    <property type="entry name" value="NAD(P)-binding Rossmann-like Domain"/>
    <property type="match status" value="1"/>
</dbReference>
<dbReference type="Gene3D" id="3.90.25.10">
    <property type="entry name" value="UDP-galactose 4-epimerase, domain 1"/>
    <property type="match status" value="1"/>
</dbReference>
<dbReference type="InterPro" id="IPR005888">
    <property type="entry name" value="dTDP_Gluc_deHydtase"/>
</dbReference>
<dbReference type="InterPro" id="IPR016040">
    <property type="entry name" value="NAD(P)-bd_dom"/>
</dbReference>
<dbReference type="InterPro" id="IPR036291">
    <property type="entry name" value="NAD(P)-bd_dom_sf"/>
</dbReference>
<dbReference type="NCBIfam" id="TIGR01181">
    <property type="entry name" value="dTDP_gluc_dehyt"/>
    <property type="match status" value="1"/>
</dbReference>
<dbReference type="PANTHER" id="PTHR43000">
    <property type="entry name" value="DTDP-D-GLUCOSE 4,6-DEHYDRATASE-RELATED"/>
    <property type="match status" value="1"/>
</dbReference>
<dbReference type="Pfam" id="PF16363">
    <property type="entry name" value="GDP_Man_Dehyd"/>
    <property type="match status" value="1"/>
</dbReference>
<dbReference type="SUPFAM" id="SSF51735">
    <property type="entry name" value="NAD(P)-binding Rossmann-fold domains"/>
    <property type="match status" value="1"/>
</dbReference>
<sequence>MDVLVTGGAGFIGSNFVRYLLDNSDDSVVTLDALTYAGSRDNLAGYLDHPNHRFVEGDIRDRELVDDLVADADVIVNFAAESHVDRSIGGAEPFVSTNVQGTQTLLDAALDADIDRFLQISTDEVYGEIHDGKFTEDDPLAPRNPYSATKAGADLLVRSYRETHDLPTLITRTCNNFGPRQHPEKLIPKFIQRAANGETLPVYGDGSNVREWIYVEDNCAALDVVLREGDIGEVYNIGSGVELSNLETTEKILEAVGGSEDQIEFVEDRAGHDQRYAIDATKTKALGWEPEWSFEDGLEACVDYYLGDDE</sequence>
<reference key="1">
    <citation type="journal article" date="2010" name="PLoS ONE">
        <title>The complete genome sequence of Haloferax volcanii DS2, a model archaeon.</title>
        <authorList>
            <person name="Hartman A.L."/>
            <person name="Norais C."/>
            <person name="Badger J.H."/>
            <person name="Delmas S."/>
            <person name="Haldenby S."/>
            <person name="Madupu R."/>
            <person name="Robinson J."/>
            <person name="Khouri H."/>
            <person name="Ren Q."/>
            <person name="Lowe T.M."/>
            <person name="Maupin-Furlow J."/>
            <person name="Pohlschroder M."/>
            <person name="Daniels C."/>
            <person name="Pfeiffer F."/>
            <person name="Allers T."/>
            <person name="Eisen J.A."/>
        </authorList>
    </citation>
    <scope>NUCLEOTIDE SEQUENCE [LARGE SCALE GENOMIC DNA]</scope>
    <source>
        <strain>ATCC 29605 / DSM 3757 / JCM 8879 / NBRC 14742 / NCIMB 2012 / VKM B-1768 / DS2</strain>
    </source>
</reference>
<reference key="2">
    <citation type="journal article" date="2014" name="PLoS Genet.">
        <title>Phylogenetically driven sequencing of extremely halophilic archaea reveals strategies for static and dynamic osmo-response.</title>
        <authorList>
            <person name="Becker E.A."/>
            <person name="Seitzer P.M."/>
            <person name="Tritt A."/>
            <person name="Larsen D."/>
            <person name="Krusor M."/>
            <person name="Yao A.I."/>
            <person name="Wu D."/>
            <person name="Madern D."/>
            <person name="Eisen J.A."/>
            <person name="Darling A.E."/>
            <person name="Facciotti M.T."/>
        </authorList>
    </citation>
    <scope>NUCLEOTIDE SEQUENCE [LARGE SCALE GENOMIC DNA]</scope>
    <source>
        <strain>ATCC 29605 / DSM 3757 / JCM 8879 / NBRC 14742 / NCIMB 2012 / VKM B-1768 / DS2</strain>
    </source>
</reference>
<reference key="3">
    <citation type="journal article" date="2013" name="MBio">
        <title>Two distinct N-glycosylation pathways process the Haloferax volcanii S-layer glycoprotein upon changes in environmental salinity.</title>
        <authorList>
            <person name="Kaminski L."/>
            <person name="Guan Z."/>
            <person name="Yurist-Doutsch S."/>
            <person name="Eichler J."/>
        </authorList>
    </citation>
    <scope>FUNCTION</scope>
    <scope>PATHWAY</scope>
    <scope>DISRUPTION PHENOTYPE</scope>
    <source>
        <strain>ATCC 29605 / DSM 3757 / JCM 8879 / NBRC 14742 / NCIMB 2012 / VKM B-1768 / DS2</strain>
    </source>
</reference>
<accession>D4GU72</accession>
<comment type="function">
    <text evidence="3">Lyase involved in N-glycan biosynthetic pathway that takes place under low-salt conditions (1.75 M instead of 3.4 M). Participates in the formation of the tetrasaccharide present at 'Asn-532' of S-layer glycoprotein Csg, consisting of a sulfated hexose, 2 hexoses and rhamnose. Involved in the addition of final rhamnose (sugar 4) of the tetrasaccharide on the dolichol phosphate carrier.</text>
</comment>
<comment type="cofactor">
    <cofactor evidence="1">
        <name>NAD(+)</name>
        <dbReference type="ChEBI" id="CHEBI:57540"/>
    </cofactor>
    <text evidence="1">Binds 1 NAD(+) per subunit.</text>
</comment>
<comment type="pathway">
    <text evidence="3">Protein modification; protein glycosylation.</text>
</comment>
<comment type="pathway">
    <text evidence="3">Cell surface structure biogenesis; S-layer biogenesis.</text>
</comment>
<comment type="disruption phenotype">
    <text evidence="3">Impaired formation of the tetrasaccharide present at 'Asn-532' of S-layer glycoprotein Csg. No effect on 'Asn-47' and 'Asn-117' glycosylation of S-layer glycoprotein Csg.</text>
</comment>
<comment type="similarity">
    <text evidence="4">Belongs to the NAD(P)-dependent epimerase/dehydratase family. dTDP-glucose dehydratase subfamily.</text>
</comment>